<evidence type="ECO:0000250" key="1"/>
<evidence type="ECO:0000250" key="2">
    <source>
        <dbReference type="UniProtKB" id="P07204"/>
    </source>
</evidence>
<evidence type="ECO:0000250" key="3">
    <source>
        <dbReference type="UniProtKB" id="P15306"/>
    </source>
</evidence>
<evidence type="ECO:0000255" key="4"/>
<evidence type="ECO:0000255" key="5">
    <source>
        <dbReference type="PROSITE-ProRule" id="PRU00040"/>
    </source>
</evidence>
<evidence type="ECO:0000255" key="6">
    <source>
        <dbReference type="PROSITE-ProRule" id="PRU00076"/>
    </source>
</evidence>
<evidence type="ECO:0000256" key="7">
    <source>
        <dbReference type="SAM" id="MobiDB-lite"/>
    </source>
</evidence>
<evidence type="ECO:0000269" key="8">
    <source>
    </source>
</evidence>
<organism>
    <name type="scientific">Canis lupus familiaris</name>
    <name type="common">Dog</name>
    <name type="synonym">Canis familiaris</name>
    <dbReference type="NCBI Taxonomy" id="9615"/>
    <lineage>
        <taxon>Eukaryota</taxon>
        <taxon>Metazoa</taxon>
        <taxon>Chordata</taxon>
        <taxon>Craniata</taxon>
        <taxon>Vertebrata</taxon>
        <taxon>Euteleostomi</taxon>
        <taxon>Mammalia</taxon>
        <taxon>Eutheria</taxon>
        <taxon>Laurasiatheria</taxon>
        <taxon>Carnivora</taxon>
        <taxon>Caniformia</taxon>
        <taxon>Canidae</taxon>
        <taxon>Canis</taxon>
    </lineage>
</organism>
<keyword id="KW-0094">Blood coagulation</keyword>
<keyword id="KW-1015">Disulfide bond</keyword>
<keyword id="KW-0245">EGF-like domain</keyword>
<keyword id="KW-0325">Glycoprotein</keyword>
<keyword id="KW-0356">Hemostasis</keyword>
<keyword id="KW-0379">Hydroxylation</keyword>
<keyword id="KW-0472">Membrane</keyword>
<keyword id="KW-0654">Proteoglycan</keyword>
<keyword id="KW-0675">Receptor</keyword>
<keyword id="KW-1185">Reference proteome</keyword>
<keyword id="KW-0677">Repeat</keyword>
<keyword id="KW-0732">Signal</keyword>
<keyword id="KW-0812">Transmembrane</keyword>
<keyword id="KW-1133">Transmembrane helix</keyword>
<sequence>MLRVLLLGVLAPAGLGLPTPAQPQPRSSQCMEHDCFQLFRGPATFLAASQTCEGLGGHLMTVRSSVAADVISLLLSGDGGDGPRLWIGLQLRRGCSDPGQGGPLRGFQWVTGDNRTSYSRWARPHVGPAGPPCAPLCVAVSDAAAPAPGEPAWEEQRCAAEADGFLCEFHFAASCRPLLVDARAAAAAGVSVTYSTPFGARGADFQALPAGSSAAVAPFGVQLACAAPRGEAEARWGREAPGAWDCSVENGGCQRACSASAGAPRCLCPADTYLQADGRSCATFAEHSCHKLCEHFCIPNASVPGSYLCMCETGYQLAADQHRCEDVDDCIQVPSLCPQLCVNTRGAFECHCYPGYELVDNECVEPVDPCFGSKCEYQCQPVSQTDYRCICAEGFAPVPHDPHRCQMFCNQTACPADCDPNSPTSCQCPEGYILDDGFMCTDIDECENGECPEACRNLPGTYECICGPDSPLAGQVATDCGRIISDPDGDSDSGSGEPPVTPTPGVTPSPSPVGPVHSGVLIGISIASLSLVVALLALLCHLRKKQGAPRAELEYKCGAPAKEVVLQHVRTEQMPQKL</sequence>
<reference key="1">
    <citation type="journal article" date="2004" name="J. Vet. Med. Sci.">
        <title>Molecular cloning of canine thrombomodulin cDNA and expression in normal tissues.</title>
        <authorList>
            <person name="Maruyama H."/>
            <person name="Oguma K."/>
            <person name="Maeda S."/>
            <person name="Kano R."/>
            <person name="Tsujimoto H."/>
            <person name="Watari T."/>
            <person name="Tokuriki M."/>
            <person name="Hasegawa A."/>
        </authorList>
    </citation>
    <scope>NUCLEOTIDE SEQUENCE [MRNA]</scope>
    <scope>TISSUE SPECIFICITY</scope>
</reference>
<comment type="function">
    <text evidence="2 3">Endothelial cell receptor that plays a critical role in regulating several physiological processes including hemostasis, coagulation, fibrinolysis, inflammation, and angiogenesis. Acts as a cofactor for thrombin activation of protein C/PROC on the surface of vascular endothelial cells leading to initiation of the activated protein C anticoagulant pathway. Also accelerates the activation of the plasma carboxypeptidase B2/CPB2, which catalyzes removal of C-terminal basic amino acids from its substrates including kinins or anaphylatoxins leading to fibrinolysis inhibition (By similarity). Plays critical protective roles in changing the cleavage specificity of protease-activated receptor 1/PAR1, inhibiting endothelial cell permeability and inflammation (By similarity). Suppresses inflammation distinctly from its anticoagulant cofactor activity by sequestering HMGB1 thereby preventing it from engaging cellular receptors such as RAGE and contributing to the inflammatory response (By similarity).</text>
</comment>
<comment type="subunit">
    <text evidence="2">Interacts with ITGAL, ITGAM and ITGB2. Interacts with thrombin/F2; this interaction switches the specificity of thrombin from a procoagulant to an anticoagulant and antifibrinolytic protease. Interacts with ANGP1 and ANGP2; these interactions significantly inhibit the generation of activated PC and TAFIa/CPB2 by the thrombin/thrombomodulin complex. Interacts with PF4; this interaction enhances generation of activated protein C. Interacts with HMGB1; this interaction inhibits HMGB1 inflammatory activity.</text>
</comment>
<comment type="subcellular location">
    <subcellularLocation>
        <location evidence="2">Membrane</location>
        <topology evidence="2">Single-pass type I membrane protein</topology>
    </subcellularLocation>
</comment>
<comment type="tissue specificity">
    <text evidence="8">Expressed in lung, liver, spleen, kidney, pancreas and lymph node. Low expression in heart, cerebrum, urinary bladder and uterus.</text>
</comment>
<comment type="PTM">
    <text evidence="1">N-glycosylated.</text>
</comment>
<comment type="PTM">
    <text evidence="1">The iron and 2-oxoglutarate dependent 3-hydroxylation of aspartate and asparagine is (R) stereospecific within EGF domains.</text>
</comment>
<accession>Q5W7P8</accession>
<name>TRBM_CANLF</name>
<dbReference type="EMBL" id="AB193481">
    <property type="protein sequence ID" value="BAD66823.1"/>
    <property type="molecule type" value="mRNA"/>
</dbReference>
<dbReference type="RefSeq" id="NP_001006954.1">
    <property type="nucleotide sequence ID" value="NM_001006953.2"/>
</dbReference>
<dbReference type="SMR" id="Q5W7P8"/>
<dbReference type="FunCoup" id="Q5W7P8">
    <property type="interactions" value="89"/>
</dbReference>
<dbReference type="STRING" id="9615.ENSCAFP00000007702"/>
<dbReference type="GlyCosmos" id="Q5W7P8">
    <property type="glycosylation" value="5 sites, No reported glycans"/>
</dbReference>
<dbReference type="SwissPalm" id="Q5W7P8"/>
<dbReference type="PaxDb" id="9612-ENSCAFP00000007702"/>
<dbReference type="GeneID" id="474355"/>
<dbReference type="KEGG" id="cfa:474355"/>
<dbReference type="CTD" id="7056"/>
<dbReference type="eggNOG" id="ENOG502R1T7">
    <property type="taxonomic scope" value="Eukaryota"/>
</dbReference>
<dbReference type="InParanoid" id="Q5W7P8"/>
<dbReference type="OrthoDB" id="4062651at2759"/>
<dbReference type="Proteomes" id="UP000002254">
    <property type="component" value="Unplaced"/>
</dbReference>
<dbReference type="Proteomes" id="UP000694429">
    <property type="component" value="Unplaced"/>
</dbReference>
<dbReference type="Proteomes" id="UP000694542">
    <property type="component" value="Unplaced"/>
</dbReference>
<dbReference type="Proteomes" id="UP000805418">
    <property type="component" value="Unplaced"/>
</dbReference>
<dbReference type="GO" id="GO:0016020">
    <property type="term" value="C:membrane"/>
    <property type="evidence" value="ECO:0007669"/>
    <property type="project" value="UniProtKB-SubCell"/>
</dbReference>
<dbReference type="GO" id="GO:0005509">
    <property type="term" value="F:calcium ion binding"/>
    <property type="evidence" value="ECO:0007669"/>
    <property type="project" value="InterPro"/>
</dbReference>
<dbReference type="GO" id="GO:0004888">
    <property type="term" value="F:transmembrane signaling receptor activity"/>
    <property type="evidence" value="ECO:0007669"/>
    <property type="project" value="InterPro"/>
</dbReference>
<dbReference type="GO" id="GO:0007596">
    <property type="term" value="P:blood coagulation"/>
    <property type="evidence" value="ECO:0007669"/>
    <property type="project" value="UniProtKB-KW"/>
</dbReference>
<dbReference type="FunFam" id="2.10.25.10:FF:000406">
    <property type="entry name" value="CD248 molecule"/>
    <property type="match status" value="1"/>
</dbReference>
<dbReference type="FunFam" id="2.10.25.10:FF:000797">
    <property type="entry name" value="Thrombomodulin"/>
    <property type="match status" value="1"/>
</dbReference>
<dbReference type="FunFam" id="2.10.25.10:FF:000816">
    <property type="entry name" value="Thrombomodulin"/>
    <property type="match status" value="1"/>
</dbReference>
<dbReference type="FunFam" id="2.10.25.10:FF:000874">
    <property type="entry name" value="Thrombomodulin"/>
    <property type="match status" value="1"/>
</dbReference>
<dbReference type="Gene3D" id="2.10.25.10">
    <property type="entry name" value="Laminin"/>
    <property type="match status" value="6"/>
</dbReference>
<dbReference type="Gene3D" id="3.10.100.10">
    <property type="entry name" value="Mannose-Binding Protein A, subunit A"/>
    <property type="match status" value="1"/>
</dbReference>
<dbReference type="InterPro" id="IPR001304">
    <property type="entry name" value="C-type_lectin-like"/>
</dbReference>
<dbReference type="InterPro" id="IPR016186">
    <property type="entry name" value="C-type_lectin-like/link_sf"/>
</dbReference>
<dbReference type="InterPro" id="IPR016187">
    <property type="entry name" value="CTDL_fold"/>
</dbReference>
<dbReference type="InterPro" id="IPR001881">
    <property type="entry name" value="EGF-like_Ca-bd_dom"/>
</dbReference>
<dbReference type="InterPro" id="IPR000742">
    <property type="entry name" value="EGF-like_dom"/>
</dbReference>
<dbReference type="InterPro" id="IPR018097">
    <property type="entry name" value="EGF_Ca-bd_CS"/>
</dbReference>
<dbReference type="InterPro" id="IPR009030">
    <property type="entry name" value="Growth_fac_rcpt_cys_sf"/>
</dbReference>
<dbReference type="InterPro" id="IPR049883">
    <property type="entry name" value="NOTCH1_EGF-like"/>
</dbReference>
<dbReference type="InterPro" id="IPR052126">
    <property type="entry name" value="Spindle_Org/Thrombomodulin"/>
</dbReference>
<dbReference type="InterPro" id="IPR015149">
    <property type="entry name" value="Tme5_EGF-like"/>
</dbReference>
<dbReference type="PANTHER" id="PTHR24036">
    <property type="entry name" value="SKELETOR-RELATED"/>
    <property type="match status" value="1"/>
</dbReference>
<dbReference type="PANTHER" id="PTHR24036:SF5">
    <property type="entry name" value="THROMBOMODULIN"/>
    <property type="match status" value="1"/>
</dbReference>
<dbReference type="Pfam" id="PF07645">
    <property type="entry name" value="EGF_CA"/>
    <property type="match status" value="2"/>
</dbReference>
<dbReference type="Pfam" id="PF09064">
    <property type="entry name" value="EGF_Tme5"/>
    <property type="match status" value="1"/>
</dbReference>
<dbReference type="Pfam" id="PF00059">
    <property type="entry name" value="Lectin_C"/>
    <property type="match status" value="1"/>
</dbReference>
<dbReference type="Pfam" id="PF25444">
    <property type="entry name" value="THBD"/>
    <property type="match status" value="1"/>
</dbReference>
<dbReference type="PIRSF" id="PIRSF001775">
    <property type="entry name" value="CD93/CD141"/>
    <property type="match status" value="1"/>
</dbReference>
<dbReference type="PRINTS" id="PR00907">
    <property type="entry name" value="THRMBOMODULN"/>
</dbReference>
<dbReference type="SMART" id="SM00034">
    <property type="entry name" value="CLECT"/>
    <property type="match status" value="1"/>
</dbReference>
<dbReference type="SMART" id="SM00181">
    <property type="entry name" value="EGF"/>
    <property type="match status" value="6"/>
</dbReference>
<dbReference type="SMART" id="SM00179">
    <property type="entry name" value="EGF_CA"/>
    <property type="match status" value="4"/>
</dbReference>
<dbReference type="SUPFAM" id="SSF56436">
    <property type="entry name" value="C-type lectin-like"/>
    <property type="match status" value="1"/>
</dbReference>
<dbReference type="SUPFAM" id="SSF57196">
    <property type="entry name" value="EGF/Laminin"/>
    <property type="match status" value="3"/>
</dbReference>
<dbReference type="SUPFAM" id="SSF57184">
    <property type="entry name" value="Growth factor receptor domain"/>
    <property type="match status" value="1"/>
</dbReference>
<dbReference type="PROSITE" id="PS00010">
    <property type="entry name" value="ASX_HYDROXYL"/>
    <property type="match status" value="2"/>
</dbReference>
<dbReference type="PROSITE" id="PS50041">
    <property type="entry name" value="C_TYPE_LECTIN_2"/>
    <property type="match status" value="1"/>
</dbReference>
<dbReference type="PROSITE" id="PS01186">
    <property type="entry name" value="EGF_2"/>
    <property type="match status" value="3"/>
</dbReference>
<dbReference type="PROSITE" id="PS50026">
    <property type="entry name" value="EGF_3"/>
    <property type="match status" value="3"/>
</dbReference>
<dbReference type="PROSITE" id="PS01187">
    <property type="entry name" value="EGF_CA"/>
    <property type="match status" value="2"/>
</dbReference>
<protein>
    <recommendedName>
        <fullName>Thrombomodulin</fullName>
        <shortName>TM</shortName>
    </recommendedName>
    <cdAntigenName>CD141</cdAntigenName>
</protein>
<feature type="signal peptide" evidence="4">
    <location>
        <begin position="1"/>
        <end position="16"/>
    </location>
</feature>
<feature type="chain" id="PRO_0000007770" description="Thrombomodulin">
    <location>
        <begin position="17"/>
        <end position="578"/>
    </location>
</feature>
<feature type="topological domain" description="Extracellular" evidence="4">
    <location>
        <begin position="17"/>
        <end position="518"/>
    </location>
</feature>
<feature type="transmembrane region" description="Helical" evidence="4">
    <location>
        <begin position="519"/>
        <end position="539"/>
    </location>
</feature>
<feature type="topological domain" description="Cytoplasmic" evidence="4">
    <location>
        <begin position="540"/>
        <end position="578"/>
    </location>
</feature>
<feature type="domain" description="C-type lectin" evidence="5">
    <location>
        <begin position="31"/>
        <end position="167"/>
    </location>
</feature>
<feature type="domain" description="EGF-like 1" evidence="6">
    <location>
        <begin position="242"/>
        <end position="282"/>
    </location>
</feature>
<feature type="domain" description="EGF-like 2" evidence="6">
    <location>
        <begin position="285"/>
        <end position="325"/>
    </location>
</feature>
<feature type="domain" description="EGF-like 3; calcium-binding" evidence="6">
    <location>
        <begin position="326"/>
        <end position="364"/>
    </location>
</feature>
<feature type="domain" description="EGF-like 4" evidence="6">
    <location>
        <begin position="366"/>
        <end position="406"/>
    </location>
</feature>
<feature type="domain" description="EGF-like 5" evidence="6">
    <location>
        <begin position="405"/>
        <end position="441"/>
    </location>
</feature>
<feature type="domain" description="EGF-like 6; calcium-binding" evidence="6">
    <location>
        <begin position="442"/>
        <end position="481"/>
    </location>
</feature>
<feature type="region of interest" description="Disordered" evidence="7">
    <location>
        <begin position="483"/>
        <end position="512"/>
    </location>
</feature>
<feature type="compositionally biased region" description="Pro residues" evidence="7">
    <location>
        <begin position="499"/>
        <end position="512"/>
    </location>
</feature>
<feature type="modified residue" description="(3R)-3-hydroxyasparagine" evidence="1">
    <location>
        <position position="343"/>
    </location>
</feature>
<feature type="glycosylation site" description="N-linked (GlcNAc...) asparagine" evidence="4">
    <location>
        <position position="114"/>
    </location>
</feature>
<feature type="glycosylation site" description="N-linked (GlcNAc...) asparagine" evidence="4">
    <location>
        <position position="300"/>
    </location>
</feature>
<feature type="glycosylation site" description="N-linked (GlcNAc...) asparagine" evidence="4">
    <location>
        <position position="410"/>
    </location>
</feature>
<feature type="glycosylation site" description="O-linked (Xyl...) (chondroitin sulfate) serine" evidence="2">
    <location>
        <position position="493"/>
    </location>
</feature>
<feature type="glycosylation site" description="O-linked (Xyl...) (chondroitin sulfate) serine" evidence="2">
    <location>
        <position position="495"/>
    </location>
</feature>
<feature type="disulfide bond" evidence="1">
    <location>
        <begin position="137"/>
        <end position="158"/>
    </location>
</feature>
<feature type="disulfide bond" evidence="1">
    <location>
        <begin position="246"/>
        <end position="257"/>
    </location>
</feature>
<feature type="disulfide bond" evidence="1">
    <location>
        <begin position="253"/>
        <end position="266"/>
    </location>
</feature>
<feature type="disulfide bond" evidence="1">
    <location>
        <begin position="268"/>
        <end position="281"/>
    </location>
</feature>
<feature type="disulfide bond" evidence="1">
    <location>
        <begin position="289"/>
        <end position="297"/>
    </location>
</feature>
<feature type="disulfide bond" evidence="1">
    <location>
        <begin position="293"/>
        <end position="309"/>
    </location>
</feature>
<feature type="disulfide bond" evidence="1">
    <location>
        <begin position="311"/>
        <end position="324"/>
    </location>
</feature>
<feature type="disulfide bond" evidence="1">
    <location>
        <begin position="330"/>
        <end position="341"/>
    </location>
</feature>
<feature type="disulfide bond" evidence="1">
    <location>
        <begin position="337"/>
        <end position="350"/>
    </location>
</feature>
<feature type="disulfide bond" evidence="1">
    <location>
        <begin position="352"/>
        <end position="363"/>
    </location>
</feature>
<feature type="disulfide bond" evidence="1">
    <location>
        <begin position="370"/>
        <end position="379"/>
    </location>
</feature>
<feature type="disulfide bond" evidence="1">
    <location>
        <begin position="375"/>
        <end position="389"/>
    </location>
</feature>
<feature type="disulfide bond" evidence="1">
    <location>
        <begin position="391"/>
        <end position="405"/>
    </location>
</feature>
<feature type="disulfide bond" evidence="1">
    <location>
        <begin position="409"/>
        <end position="414"/>
    </location>
</feature>
<feature type="disulfide bond" evidence="1">
    <location>
        <begin position="418"/>
        <end position="426"/>
    </location>
</feature>
<feature type="disulfide bond" evidence="1">
    <location>
        <begin position="428"/>
        <end position="440"/>
    </location>
</feature>
<feature type="disulfide bond" evidence="1">
    <location>
        <begin position="446"/>
        <end position="455"/>
    </location>
</feature>
<feature type="disulfide bond" evidence="1">
    <location>
        <begin position="451"/>
        <end position="464"/>
    </location>
</feature>
<feature type="disulfide bond" evidence="1">
    <location>
        <begin position="466"/>
        <end position="480"/>
    </location>
</feature>
<proteinExistence type="evidence at transcript level"/>
<gene>
    <name type="primary">THBD</name>
</gene>